<protein>
    <recommendedName>
        <fullName evidence="4">Sulfakinin-1</fullName>
        <shortName evidence="4">EubPo-SK-1</shortName>
    </recommendedName>
</protein>
<comment type="function">
    <text evidence="1">Myotropic peptide.</text>
</comment>
<comment type="subcellular location">
    <subcellularLocation>
        <location evidence="5">Secreted</location>
    </subcellularLocation>
</comment>
<comment type="similarity">
    <text evidence="2">Belongs to the gastrin/cholecystokinin family.</text>
</comment>
<feature type="peptide" id="PRO_0000378875" description="Sulfakinin-1" evidence="3">
    <location>
        <begin position="1"/>
        <end position="11"/>
    </location>
</feature>
<feature type="modified residue" description="Sulfotyrosine" evidence="1">
    <location>
        <position position="6"/>
    </location>
</feature>
<feature type="modified residue" description="Phenylalanine amide" evidence="3">
    <location>
        <position position="11"/>
    </location>
</feature>
<name>SK1_EUBPO</name>
<accession>P85625</accession>
<dbReference type="GO" id="GO:0005576">
    <property type="term" value="C:extracellular region"/>
    <property type="evidence" value="ECO:0007669"/>
    <property type="project" value="UniProtKB-SubCell"/>
</dbReference>
<dbReference type="GO" id="GO:0005179">
    <property type="term" value="F:hormone activity"/>
    <property type="evidence" value="ECO:0007669"/>
    <property type="project" value="UniProtKB-KW"/>
</dbReference>
<dbReference type="GO" id="GO:0007218">
    <property type="term" value="P:neuropeptide signaling pathway"/>
    <property type="evidence" value="ECO:0007669"/>
    <property type="project" value="UniProtKB-KW"/>
</dbReference>
<dbReference type="InterPro" id="IPR013152">
    <property type="entry name" value="Gastrin/cholecystokinin_CS"/>
</dbReference>
<dbReference type="InterPro" id="IPR013259">
    <property type="entry name" value="Sulfakinin"/>
</dbReference>
<dbReference type="Pfam" id="PF08257">
    <property type="entry name" value="Sulfakinin"/>
    <property type="match status" value="1"/>
</dbReference>
<dbReference type="PROSITE" id="PS00259">
    <property type="entry name" value="GASTRIN"/>
    <property type="match status" value="1"/>
</dbReference>
<evidence type="ECO:0000250" key="1">
    <source>
        <dbReference type="UniProtKB" id="P41493"/>
    </source>
</evidence>
<evidence type="ECO:0000255" key="2"/>
<evidence type="ECO:0000269" key="3">
    <source>
    </source>
</evidence>
<evidence type="ECO:0000303" key="4">
    <source>
    </source>
</evidence>
<evidence type="ECO:0000305" key="5"/>
<organism>
    <name type="scientific">Eublaberus posticus</name>
    <name type="common">Golden cockroach</name>
    <dbReference type="NCBI Taxonomy" id="36951"/>
    <lineage>
        <taxon>Eukaryota</taxon>
        <taxon>Metazoa</taxon>
        <taxon>Ecdysozoa</taxon>
        <taxon>Arthropoda</taxon>
        <taxon>Hexapoda</taxon>
        <taxon>Insecta</taxon>
        <taxon>Pterygota</taxon>
        <taxon>Neoptera</taxon>
        <taxon>Polyneoptera</taxon>
        <taxon>Dictyoptera</taxon>
        <taxon>Blattodea</taxon>
        <taxon>Blaberoidea</taxon>
        <taxon>Blaberidae</taxon>
        <taxon>Blaberinae</taxon>
        <taxon>Eublaberus</taxon>
    </lineage>
</organism>
<reference evidence="5" key="1">
    <citation type="journal article" date="2009" name="BMC Evol. Biol.">
        <title>A proteomic approach for studying insect phylogeny: CAPA peptides of ancient insect taxa (Dictyoptera, Blattoptera) as a test case.</title>
        <authorList>
            <person name="Roth S."/>
            <person name="Fromm B."/>
            <person name="Gaede G."/>
            <person name="Predel R."/>
        </authorList>
    </citation>
    <scope>PROTEIN SEQUENCE</scope>
    <scope>AMIDATION AT PHE-11</scope>
    <source>
        <tissue evidence="3">Corpora cardiaca</tissue>
    </source>
</reference>
<keyword id="KW-0027">Amidation</keyword>
<keyword id="KW-0903">Direct protein sequencing</keyword>
<keyword id="KW-0372">Hormone</keyword>
<keyword id="KW-0527">Neuropeptide</keyword>
<keyword id="KW-0964">Secreted</keyword>
<keyword id="KW-0765">Sulfation</keyword>
<sequence length="11" mass="1459">EQFEDYGHMRF</sequence>
<proteinExistence type="evidence at protein level"/>